<gene>
    <name type="ordered locus">SAOUHSC_01206</name>
</gene>
<proteinExistence type="inferred from homology"/>
<accession>Q2FZ47</accession>
<protein>
    <recommendedName>
        <fullName evidence="1">UPF0122 protein SAOUHSC_01206</fullName>
    </recommendedName>
</protein>
<dbReference type="EMBL" id="CP000253">
    <property type="protein sequence ID" value="ABD30311.1"/>
    <property type="molecule type" value="Genomic_DNA"/>
</dbReference>
<dbReference type="RefSeq" id="WP_000531320.1">
    <property type="nucleotide sequence ID" value="NZ_LS483365.1"/>
</dbReference>
<dbReference type="RefSeq" id="YP_499743.1">
    <property type="nucleotide sequence ID" value="NC_007795.1"/>
</dbReference>
<dbReference type="SMR" id="Q2FZ47"/>
<dbReference type="STRING" id="93061.SAOUHSC_01206"/>
<dbReference type="PaxDb" id="1280-SAXN108_1237"/>
<dbReference type="GeneID" id="3919472"/>
<dbReference type="KEGG" id="sao:SAOUHSC_01206"/>
<dbReference type="PATRIC" id="fig|93061.5.peg.1106"/>
<dbReference type="eggNOG" id="COG2739">
    <property type="taxonomic scope" value="Bacteria"/>
</dbReference>
<dbReference type="HOGENOM" id="CLU_129218_1_1_9"/>
<dbReference type="OrthoDB" id="6392at2"/>
<dbReference type="PRO" id="PR:Q2FZ47"/>
<dbReference type="Proteomes" id="UP000008816">
    <property type="component" value="Chromosome"/>
</dbReference>
<dbReference type="Gene3D" id="1.10.10.10">
    <property type="entry name" value="Winged helix-like DNA-binding domain superfamily/Winged helix DNA-binding domain"/>
    <property type="match status" value="1"/>
</dbReference>
<dbReference type="HAMAP" id="MF_00245">
    <property type="entry name" value="UPF0122"/>
    <property type="match status" value="1"/>
</dbReference>
<dbReference type="InterPro" id="IPR013324">
    <property type="entry name" value="RNA_pol_sigma_r3/r4-like"/>
</dbReference>
<dbReference type="InterPro" id="IPR007394">
    <property type="entry name" value="UPF0122"/>
</dbReference>
<dbReference type="InterPro" id="IPR054831">
    <property type="entry name" value="UPF0122_fam_protein"/>
</dbReference>
<dbReference type="InterPro" id="IPR036388">
    <property type="entry name" value="WH-like_DNA-bd_sf"/>
</dbReference>
<dbReference type="NCBIfam" id="NF001067">
    <property type="entry name" value="PRK00118.1-2"/>
    <property type="match status" value="1"/>
</dbReference>
<dbReference type="NCBIfam" id="NF001070">
    <property type="entry name" value="PRK00118.1-6"/>
    <property type="match status" value="1"/>
</dbReference>
<dbReference type="NCBIfam" id="NF045758">
    <property type="entry name" value="YlxM"/>
    <property type="match status" value="1"/>
</dbReference>
<dbReference type="PANTHER" id="PTHR40083">
    <property type="entry name" value="UPF0122 PROTEIN CBO2450/CLC_2298"/>
    <property type="match status" value="1"/>
</dbReference>
<dbReference type="PANTHER" id="PTHR40083:SF1">
    <property type="entry name" value="UPF0122 PROTEIN YLXM"/>
    <property type="match status" value="1"/>
</dbReference>
<dbReference type="Pfam" id="PF04297">
    <property type="entry name" value="UPF0122"/>
    <property type="match status" value="1"/>
</dbReference>
<dbReference type="SUPFAM" id="SSF88659">
    <property type="entry name" value="Sigma3 and sigma4 domains of RNA polymerase sigma factors"/>
    <property type="match status" value="1"/>
</dbReference>
<reference key="1">
    <citation type="book" date="2006" name="Gram positive pathogens, 2nd edition">
        <title>The Staphylococcus aureus NCTC 8325 genome.</title>
        <editorList>
            <person name="Fischetti V."/>
            <person name="Novick R."/>
            <person name="Ferretti J."/>
            <person name="Portnoy D."/>
            <person name="Rood J."/>
        </editorList>
        <authorList>
            <person name="Gillaspy A.F."/>
            <person name="Worrell V."/>
            <person name="Orvis J."/>
            <person name="Roe B.A."/>
            <person name="Dyer D.W."/>
            <person name="Iandolo J.J."/>
        </authorList>
    </citation>
    <scope>NUCLEOTIDE SEQUENCE [LARGE SCALE GENOMIC DNA]</scope>
    <source>
        <strain>NCTC 8325 / PS 47</strain>
    </source>
</reference>
<sequence>MGQNDLVKTLRMNYLFDFYQSLLTNKQRNYLELFYLEDYSLSEIADTFNVSRQAVYDNIRRTGDLVEDYEKKLELYQKFEQRREIYDEMKQHLSNPEQIQRYIQQLEDLE</sequence>
<comment type="function">
    <text evidence="1">Might take part in the signal recognition particle (SRP) pathway. This is inferred from the conservation of its genetic proximity to ftsY/ffh. May be a regulatory protein.</text>
</comment>
<comment type="similarity">
    <text evidence="1">Belongs to the UPF0122 family.</text>
</comment>
<feature type="chain" id="PRO_1000012539" description="UPF0122 protein SAOUHSC_01206">
    <location>
        <begin position="1"/>
        <end position="110"/>
    </location>
</feature>
<organism>
    <name type="scientific">Staphylococcus aureus (strain NCTC 8325 / PS 47)</name>
    <dbReference type="NCBI Taxonomy" id="93061"/>
    <lineage>
        <taxon>Bacteria</taxon>
        <taxon>Bacillati</taxon>
        <taxon>Bacillota</taxon>
        <taxon>Bacilli</taxon>
        <taxon>Bacillales</taxon>
        <taxon>Staphylococcaceae</taxon>
        <taxon>Staphylococcus</taxon>
    </lineage>
</organism>
<keyword id="KW-1185">Reference proteome</keyword>
<name>Y1206_STAA8</name>
<evidence type="ECO:0000255" key="1">
    <source>
        <dbReference type="HAMAP-Rule" id="MF_00245"/>
    </source>
</evidence>